<protein>
    <recommendedName>
        <fullName>Lectin</fullName>
    </recommendedName>
</protein>
<name>LEC_ONOVI</name>
<accession>P02874</accession>
<reference key="1">
    <citation type="journal article" date="1984" name="Biochemistry">
        <title>Lectin from sainfoin (Onobrychis viciifolia scop.). Complete amino acid sequence.</title>
        <authorList>
            <person name="Kouchalakos R.N."/>
            <person name="Bates O.J."/>
            <person name="Bradshaw R.A."/>
            <person name="Hapner K.D."/>
        </authorList>
    </citation>
    <scope>PROTEIN SEQUENCE</scope>
</reference>
<keyword id="KW-0903">Direct protein sequencing</keyword>
<keyword id="KW-0325">Glycoprotein</keyword>
<keyword id="KW-0430">Lectin</keyword>
<keyword id="KW-0465">Mannose-binding</keyword>
<sequence>AENTVSFDFSKFLSGQENLILQGDTVTDDSNRCLVLTRENNGRPVQDSVGRVLYQTPIHLWDKQIDKEASFETSFTFFIYRENINRGGDGITFFLAPTDTQPKSGGGYLGIFKDAESNETVVAVEFDTFSNRWDPANSHIGINVNSVKSKITTPWGLKNDYFTVTITYDATRSLSVSSFYRNKPDDIFTVKASVHLRDALPQWVRIGLSAATGDLVEQHRLYSWSFKSVLPLDSST</sequence>
<proteinExistence type="evidence at protein level"/>
<dbReference type="PIR" id="A03366">
    <property type="entry name" value="LNOJ"/>
</dbReference>
<dbReference type="SMR" id="P02874"/>
<dbReference type="iPTMnet" id="P02874"/>
<dbReference type="GO" id="GO:0005537">
    <property type="term" value="F:D-mannose binding"/>
    <property type="evidence" value="ECO:0007669"/>
    <property type="project" value="UniProtKB-KW"/>
</dbReference>
<dbReference type="CDD" id="cd06899">
    <property type="entry name" value="lectin_legume_LecRK_Arcelin_ConA"/>
    <property type="match status" value="1"/>
</dbReference>
<dbReference type="Gene3D" id="2.60.120.200">
    <property type="match status" value="1"/>
</dbReference>
<dbReference type="InterPro" id="IPR013320">
    <property type="entry name" value="ConA-like_dom_sf"/>
</dbReference>
<dbReference type="InterPro" id="IPR016363">
    <property type="entry name" value="L-lectin"/>
</dbReference>
<dbReference type="InterPro" id="IPR000985">
    <property type="entry name" value="Lectin_LegA_CS"/>
</dbReference>
<dbReference type="InterPro" id="IPR019825">
    <property type="entry name" value="Lectin_legB_Mn/Ca_BS"/>
</dbReference>
<dbReference type="InterPro" id="IPR001220">
    <property type="entry name" value="Legume_lectin_dom"/>
</dbReference>
<dbReference type="InterPro" id="IPR050258">
    <property type="entry name" value="Leguminous_Lectin"/>
</dbReference>
<dbReference type="PANTHER" id="PTHR32401">
    <property type="entry name" value="CONCANAVALIN A-LIKE LECTIN FAMILY PROTEIN"/>
    <property type="match status" value="1"/>
</dbReference>
<dbReference type="PANTHER" id="PTHR32401:SF47">
    <property type="entry name" value="LEGUME LECTIN DOMAIN-CONTAINING PROTEIN"/>
    <property type="match status" value="1"/>
</dbReference>
<dbReference type="Pfam" id="PF00139">
    <property type="entry name" value="Lectin_legB"/>
    <property type="match status" value="1"/>
</dbReference>
<dbReference type="PIRSF" id="PIRSF002690">
    <property type="entry name" value="L-type_lectin_plant"/>
    <property type="match status" value="1"/>
</dbReference>
<dbReference type="SUPFAM" id="SSF49899">
    <property type="entry name" value="Concanavalin A-like lectins/glucanases"/>
    <property type="match status" value="1"/>
</dbReference>
<dbReference type="PROSITE" id="PS00308">
    <property type="entry name" value="LECTIN_LEGUME_ALPHA"/>
    <property type="match status" value="1"/>
</dbReference>
<dbReference type="PROSITE" id="PS00307">
    <property type="entry name" value="LECTIN_LEGUME_BETA"/>
    <property type="match status" value="1"/>
</dbReference>
<feature type="chain" id="PRO_0000105109" description="Lectin">
    <location>
        <begin position="1"/>
        <end position="236"/>
    </location>
</feature>
<feature type="glycosylation site" description="N-linked (GlcNAc...) asparagine" evidence="1">
    <location>
        <position position="118"/>
    </location>
</feature>
<feature type="sequence variant" description="In 50% of the molecules.">
    <original>V</original>
    <variation>I</variation>
    <location>
        <position position="49"/>
    </location>
</feature>
<organism>
    <name type="scientific">Onobrychis viciifolia</name>
    <name type="common">Common sainfoin</name>
    <dbReference type="NCBI Taxonomy" id="3882"/>
    <lineage>
        <taxon>Eukaryota</taxon>
        <taxon>Viridiplantae</taxon>
        <taxon>Streptophyta</taxon>
        <taxon>Embryophyta</taxon>
        <taxon>Tracheophyta</taxon>
        <taxon>Spermatophyta</taxon>
        <taxon>Magnoliopsida</taxon>
        <taxon>eudicotyledons</taxon>
        <taxon>Gunneridae</taxon>
        <taxon>Pentapetalae</taxon>
        <taxon>rosids</taxon>
        <taxon>fabids</taxon>
        <taxon>Fabales</taxon>
        <taxon>Fabaceae</taxon>
        <taxon>Papilionoideae</taxon>
        <taxon>50 kb inversion clade</taxon>
        <taxon>NPAAA clade</taxon>
        <taxon>Hologalegina</taxon>
        <taxon>IRL clade</taxon>
        <taxon>Hedysareae</taxon>
        <taxon>Onobrychis</taxon>
    </lineage>
</organism>
<comment type="function">
    <text>D-mannose and D-glucose specific lectin.</text>
</comment>
<comment type="subunit">
    <text>Homodimer of noncovalently associated chains.</text>
</comment>
<comment type="similarity">
    <text evidence="2">Belongs to the leguminous lectin family.</text>
</comment>
<evidence type="ECO:0000269" key="1">
    <source>
    </source>
</evidence>
<evidence type="ECO:0000305" key="2"/>